<dbReference type="EC" id="2.2.1.1"/>
<dbReference type="EMBL" id="BA000031">
    <property type="protein sequence ID" value="BAC60867.1"/>
    <property type="molecule type" value="Genomic_DNA"/>
</dbReference>
<dbReference type="RefSeq" id="NP_798983.1">
    <property type="nucleotide sequence ID" value="NC_004603.1"/>
</dbReference>
<dbReference type="SMR" id="Q87LK8"/>
<dbReference type="GeneID" id="1190128"/>
<dbReference type="KEGG" id="vpa:VP2605"/>
<dbReference type="PATRIC" id="fig|223926.6.peg.2501"/>
<dbReference type="eggNOG" id="COG0021">
    <property type="taxonomic scope" value="Bacteria"/>
</dbReference>
<dbReference type="HOGENOM" id="CLU_009227_0_1_6"/>
<dbReference type="Proteomes" id="UP000002493">
    <property type="component" value="Chromosome 1"/>
</dbReference>
<dbReference type="GO" id="GO:0005829">
    <property type="term" value="C:cytosol"/>
    <property type="evidence" value="ECO:0007669"/>
    <property type="project" value="TreeGrafter"/>
</dbReference>
<dbReference type="GO" id="GO:0046872">
    <property type="term" value="F:metal ion binding"/>
    <property type="evidence" value="ECO:0007669"/>
    <property type="project" value="UniProtKB-KW"/>
</dbReference>
<dbReference type="GO" id="GO:0004802">
    <property type="term" value="F:transketolase activity"/>
    <property type="evidence" value="ECO:0007669"/>
    <property type="project" value="UniProtKB-EC"/>
</dbReference>
<dbReference type="GO" id="GO:0006098">
    <property type="term" value="P:pentose-phosphate shunt"/>
    <property type="evidence" value="ECO:0007669"/>
    <property type="project" value="TreeGrafter"/>
</dbReference>
<dbReference type="CDD" id="cd07033">
    <property type="entry name" value="TPP_PYR_DXS_TK_like"/>
    <property type="match status" value="1"/>
</dbReference>
<dbReference type="CDD" id="cd02012">
    <property type="entry name" value="TPP_TK"/>
    <property type="match status" value="1"/>
</dbReference>
<dbReference type="FunFam" id="3.40.50.920:FF:000003">
    <property type="entry name" value="Transketolase"/>
    <property type="match status" value="1"/>
</dbReference>
<dbReference type="FunFam" id="3.40.50.970:FF:000003">
    <property type="entry name" value="Transketolase"/>
    <property type="match status" value="1"/>
</dbReference>
<dbReference type="FunFam" id="3.40.50.970:FF:000004">
    <property type="entry name" value="Transketolase"/>
    <property type="match status" value="1"/>
</dbReference>
<dbReference type="Gene3D" id="3.40.50.920">
    <property type="match status" value="1"/>
</dbReference>
<dbReference type="Gene3D" id="3.40.50.970">
    <property type="match status" value="2"/>
</dbReference>
<dbReference type="InterPro" id="IPR029061">
    <property type="entry name" value="THDP-binding"/>
</dbReference>
<dbReference type="InterPro" id="IPR009014">
    <property type="entry name" value="Transketo_C/PFOR_II"/>
</dbReference>
<dbReference type="InterPro" id="IPR055152">
    <property type="entry name" value="Transketolase-like_C_2"/>
</dbReference>
<dbReference type="InterPro" id="IPR005475">
    <property type="entry name" value="Transketolase-like_Pyr-bd"/>
</dbReference>
<dbReference type="InterPro" id="IPR005478">
    <property type="entry name" value="Transketolase_bac-like"/>
</dbReference>
<dbReference type="InterPro" id="IPR020826">
    <property type="entry name" value="Transketolase_BS"/>
</dbReference>
<dbReference type="InterPro" id="IPR049557">
    <property type="entry name" value="Transketolase_CS"/>
</dbReference>
<dbReference type="InterPro" id="IPR033247">
    <property type="entry name" value="Transketolase_fam"/>
</dbReference>
<dbReference type="InterPro" id="IPR005474">
    <property type="entry name" value="Transketolase_N"/>
</dbReference>
<dbReference type="NCBIfam" id="TIGR00232">
    <property type="entry name" value="tktlase_bact"/>
    <property type="match status" value="1"/>
</dbReference>
<dbReference type="PANTHER" id="PTHR43522">
    <property type="entry name" value="TRANSKETOLASE"/>
    <property type="match status" value="1"/>
</dbReference>
<dbReference type="PANTHER" id="PTHR43522:SF2">
    <property type="entry name" value="TRANSKETOLASE 1-RELATED"/>
    <property type="match status" value="1"/>
</dbReference>
<dbReference type="Pfam" id="PF02779">
    <property type="entry name" value="Transket_pyr"/>
    <property type="match status" value="1"/>
</dbReference>
<dbReference type="Pfam" id="PF22613">
    <property type="entry name" value="Transketolase_C_1"/>
    <property type="match status" value="1"/>
</dbReference>
<dbReference type="Pfam" id="PF00456">
    <property type="entry name" value="Transketolase_N"/>
    <property type="match status" value="1"/>
</dbReference>
<dbReference type="SMART" id="SM00861">
    <property type="entry name" value="Transket_pyr"/>
    <property type="match status" value="1"/>
</dbReference>
<dbReference type="SUPFAM" id="SSF52518">
    <property type="entry name" value="Thiamin diphosphate-binding fold (THDP-binding)"/>
    <property type="match status" value="2"/>
</dbReference>
<dbReference type="SUPFAM" id="SSF52922">
    <property type="entry name" value="TK C-terminal domain-like"/>
    <property type="match status" value="1"/>
</dbReference>
<dbReference type="PROSITE" id="PS00801">
    <property type="entry name" value="TRANSKETOLASE_1"/>
    <property type="match status" value="1"/>
</dbReference>
<dbReference type="PROSITE" id="PS00802">
    <property type="entry name" value="TRANSKETOLASE_2"/>
    <property type="match status" value="1"/>
</dbReference>
<proteinExistence type="inferred from homology"/>
<reference key="1">
    <citation type="journal article" date="2003" name="Lancet">
        <title>Genome sequence of Vibrio parahaemolyticus: a pathogenic mechanism distinct from that of V. cholerae.</title>
        <authorList>
            <person name="Makino K."/>
            <person name="Oshima K."/>
            <person name="Kurokawa K."/>
            <person name="Yokoyama K."/>
            <person name="Uda T."/>
            <person name="Tagomori K."/>
            <person name="Iijima Y."/>
            <person name="Najima M."/>
            <person name="Nakano M."/>
            <person name="Yamashita A."/>
            <person name="Kubota Y."/>
            <person name="Kimura S."/>
            <person name="Yasunaga T."/>
            <person name="Honda T."/>
            <person name="Shinagawa H."/>
            <person name="Hattori M."/>
            <person name="Iida T."/>
        </authorList>
    </citation>
    <scope>NUCLEOTIDE SEQUENCE [LARGE SCALE GENOMIC DNA]</scope>
    <source>
        <strain>RIMD 2210633</strain>
    </source>
</reference>
<accession>Q87LK8</accession>
<keyword id="KW-0106">Calcium</keyword>
<keyword id="KW-0460">Magnesium</keyword>
<keyword id="KW-0479">Metal-binding</keyword>
<keyword id="KW-0786">Thiamine pyrophosphate</keyword>
<keyword id="KW-0808">Transferase</keyword>
<evidence type="ECO:0000250" key="1"/>
<evidence type="ECO:0000305" key="2"/>
<protein>
    <recommendedName>
        <fullName>Transketolase 1</fullName>
        <shortName>TK 1</shortName>
        <ecNumber>2.2.1.1</ecNumber>
    </recommendedName>
</protein>
<gene>
    <name type="primary">tkt1</name>
    <name type="ordered locus">VP2605</name>
</gene>
<sequence>MSSRKHLANAIRALSMDGVQQANSGHPGAPMGMADIAEVLWRSHLNHNPANPEWADRDRFVLSNGHGSMLIYSLLHLSGYELSIDDLKNFRQLHSKTPGHPEYGYAPGIETTTGPLGQGITNAVGMALAEKALAAQFNKEGHDIIDHFTYVFMGDGCLMEGISHEACSLAGTLGLGKLIAFWDDNGISIDGHVEGWFSDDTPKRFEAYGWHVIPAVDGHDSDAINAAIEAAKADPRPTLICTKTIIGFGSPNKSGSHDCHGAPLGAEEIAAAREFLGWEHPAFEIPADVYAEWDAKAAGAEKEAAWNAKFEAYAAAYPTEAAELKRRLNGELPAEWEEKANQIIADLQANPANIASRKASQNALEAFGQMLPEFMGGSADLAPSNLTMWSGSKSLEANDFSGNYIHYGVREFGMTAIMNGIALHGGFVPYGATFLMFMEYARNAMRMAALMKIQNIQVYTHDSIGLGEDGPTHQPVEQMASLRLTPNMNTWRPCDQVESAVAWKLAIERKDAPTALIFSRQNLAQQERTAEQVTDIAKGGYILKDSDGKPELILIATGSEVELAVKAAEQLTAEGKKVRVVSMPSTDAFDKQDAAYREAVLPSDVTARIAIEAGIADFWYKYVGFDGRIIGMTTFGESAPADQLFEMFGFTVENVVNTAKELLA</sequence>
<organism>
    <name type="scientific">Vibrio parahaemolyticus serotype O3:K6 (strain RIMD 2210633)</name>
    <dbReference type="NCBI Taxonomy" id="223926"/>
    <lineage>
        <taxon>Bacteria</taxon>
        <taxon>Pseudomonadati</taxon>
        <taxon>Pseudomonadota</taxon>
        <taxon>Gammaproteobacteria</taxon>
        <taxon>Vibrionales</taxon>
        <taxon>Vibrionaceae</taxon>
        <taxon>Vibrio</taxon>
    </lineage>
</organism>
<name>TKT1_VIBPA</name>
<comment type="function">
    <text evidence="1">Catalyzes the transfer of a two-carbon ketol group from a ketose donor to an aldose acceptor, via a covalent intermediate with the cofactor thiamine pyrophosphate.</text>
</comment>
<comment type="catalytic activity">
    <reaction>
        <text>D-sedoheptulose 7-phosphate + D-glyceraldehyde 3-phosphate = aldehydo-D-ribose 5-phosphate + D-xylulose 5-phosphate</text>
        <dbReference type="Rhea" id="RHEA:10508"/>
        <dbReference type="ChEBI" id="CHEBI:57483"/>
        <dbReference type="ChEBI" id="CHEBI:57737"/>
        <dbReference type="ChEBI" id="CHEBI:58273"/>
        <dbReference type="ChEBI" id="CHEBI:59776"/>
        <dbReference type="EC" id="2.2.1.1"/>
    </reaction>
</comment>
<comment type="cofactor">
    <cofactor evidence="1">
        <name>Mg(2+)</name>
        <dbReference type="ChEBI" id="CHEBI:18420"/>
    </cofactor>
    <cofactor evidence="1">
        <name>Ca(2+)</name>
        <dbReference type="ChEBI" id="CHEBI:29108"/>
    </cofactor>
    <cofactor evidence="1">
        <name>Mn(2+)</name>
        <dbReference type="ChEBI" id="CHEBI:29035"/>
    </cofactor>
    <cofactor evidence="1">
        <name>Co(2+)</name>
        <dbReference type="ChEBI" id="CHEBI:48828"/>
    </cofactor>
    <text evidence="1">Binds 1 Mg(2+) ion per subunit. Can also utilize other divalent metal cations, such as Ca(2+), Mn(2+) and Co(2+).</text>
</comment>
<comment type="cofactor">
    <cofactor evidence="1">
        <name>thiamine diphosphate</name>
        <dbReference type="ChEBI" id="CHEBI:58937"/>
    </cofactor>
    <text evidence="1">Binds 1 thiamine pyrophosphate per subunit.</text>
</comment>
<comment type="subunit">
    <text evidence="1">Homodimer.</text>
</comment>
<comment type="similarity">
    <text evidence="2">Belongs to the transketolase family.</text>
</comment>
<feature type="chain" id="PRO_0000191884" description="Transketolase 1">
    <location>
        <begin position="1"/>
        <end position="664"/>
    </location>
</feature>
<feature type="active site" description="Proton donor" evidence="1">
    <location>
        <position position="411"/>
    </location>
</feature>
<feature type="binding site" evidence="1">
    <location>
        <position position="26"/>
    </location>
    <ligand>
        <name>substrate</name>
    </ligand>
</feature>
<feature type="binding site" evidence="1">
    <location>
        <position position="66"/>
    </location>
    <ligand>
        <name>thiamine diphosphate</name>
        <dbReference type="ChEBI" id="CHEBI:58937"/>
    </ligand>
</feature>
<feature type="binding site" evidence="1">
    <location>
        <begin position="114"/>
        <end position="116"/>
    </location>
    <ligand>
        <name>thiamine diphosphate</name>
        <dbReference type="ChEBI" id="CHEBI:58937"/>
    </ligand>
</feature>
<feature type="binding site" evidence="1">
    <location>
        <position position="155"/>
    </location>
    <ligand>
        <name>Mg(2+)</name>
        <dbReference type="ChEBI" id="CHEBI:18420"/>
    </ligand>
</feature>
<feature type="binding site" evidence="1">
    <location>
        <position position="156"/>
    </location>
    <ligand>
        <name>thiamine diphosphate</name>
        <dbReference type="ChEBI" id="CHEBI:58937"/>
    </ligand>
</feature>
<feature type="binding site" evidence="1">
    <location>
        <position position="185"/>
    </location>
    <ligand>
        <name>Mg(2+)</name>
        <dbReference type="ChEBI" id="CHEBI:18420"/>
    </ligand>
</feature>
<feature type="binding site" evidence="1">
    <location>
        <position position="185"/>
    </location>
    <ligand>
        <name>thiamine diphosphate</name>
        <dbReference type="ChEBI" id="CHEBI:58937"/>
    </ligand>
</feature>
<feature type="binding site" evidence="1">
    <location>
        <position position="187"/>
    </location>
    <ligand>
        <name>Mg(2+)</name>
        <dbReference type="ChEBI" id="CHEBI:18420"/>
    </ligand>
</feature>
<feature type="binding site" evidence="1">
    <location>
        <position position="260"/>
    </location>
    <ligand>
        <name>substrate</name>
    </ligand>
</feature>
<feature type="binding site" evidence="1">
    <location>
        <position position="260"/>
    </location>
    <ligand>
        <name>thiamine diphosphate</name>
        <dbReference type="ChEBI" id="CHEBI:58937"/>
    </ligand>
</feature>
<feature type="binding site" evidence="1">
    <location>
        <position position="357"/>
    </location>
    <ligand>
        <name>substrate</name>
    </ligand>
</feature>
<feature type="binding site" evidence="1">
    <location>
        <position position="384"/>
    </location>
    <ligand>
        <name>substrate</name>
    </ligand>
</feature>
<feature type="binding site" evidence="1">
    <location>
        <position position="437"/>
    </location>
    <ligand>
        <name>thiamine diphosphate</name>
        <dbReference type="ChEBI" id="CHEBI:58937"/>
    </ligand>
</feature>
<feature type="binding site" evidence="1">
    <location>
        <position position="461"/>
    </location>
    <ligand>
        <name>substrate</name>
    </ligand>
</feature>
<feature type="binding site" evidence="1">
    <location>
        <position position="469"/>
    </location>
    <ligand>
        <name>substrate</name>
    </ligand>
</feature>
<feature type="binding site" evidence="1">
    <location>
        <position position="520"/>
    </location>
    <ligand>
        <name>substrate</name>
    </ligand>
</feature>
<feature type="site" description="Important for catalytic activity" evidence="1">
    <location>
        <position position="26"/>
    </location>
</feature>
<feature type="site" description="Important for catalytic activity" evidence="1">
    <location>
        <position position="260"/>
    </location>
</feature>